<comment type="function">
    <text evidence="2">Cell wall formation.</text>
</comment>
<comment type="catalytic activity">
    <reaction evidence="2">
        <text>2 D-alanine + ATP = D-alanyl-D-alanine + ADP + phosphate + H(+)</text>
        <dbReference type="Rhea" id="RHEA:11224"/>
        <dbReference type="ChEBI" id="CHEBI:15378"/>
        <dbReference type="ChEBI" id="CHEBI:30616"/>
        <dbReference type="ChEBI" id="CHEBI:43474"/>
        <dbReference type="ChEBI" id="CHEBI:57416"/>
        <dbReference type="ChEBI" id="CHEBI:57822"/>
        <dbReference type="ChEBI" id="CHEBI:456216"/>
        <dbReference type="EC" id="6.3.2.4"/>
    </reaction>
</comment>
<comment type="cofactor">
    <cofactor evidence="1">
        <name>Mg(2+)</name>
        <dbReference type="ChEBI" id="CHEBI:18420"/>
    </cofactor>
    <cofactor evidence="1">
        <name>Mn(2+)</name>
        <dbReference type="ChEBI" id="CHEBI:29035"/>
    </cofactor>
    <text evidence="1">Binds 2 magnesium or manganese ions per subunit.</text>
</comment>
<comment type="pathway">
    <text evidence="2">Cell wall biogenesis; peptidoglycan biosynthesis.</text>
</comment>
<comment type="subcellular location">
    <subcellularLocation>
        <location evidence="2">Cytoplasm</location>
    </subcellularLocation>
</comment>
<comment type="similarity">
    <text evidence="2">Belongs to the D-alanine--D-alanine ligase family.</text>
</comment>
<reference key="1">
    <citation type="submission" date="2008-08" db="EMBL/GenBank/DDBJ databases">
        <title>Complete sequence of Anaeromyxobacter sp. K.</title>
        <authorList>
            <consortium name="US DOE Joint Genome Institute"/>
            <person name="Lucas S."/>
            <person name="Copeland A."/>
            <person name="Lapidus A."/>
            <person name="Glavina del Rio T."/>
            <person name="Dalin E."/>
            <person name="Tice H."/>
            <person name="Bruce D."/>
            <person name="Goodwin L."/>
            <person name="Pitluck S."/>
            <person name="Saunders E."/>
            <person name="Brettin T."/>
            <person name="Detter J.C."/>
            <person name="Han C."/>
            <person name="Larimer F."/>
            <person name="Land M."/>
            <person name="Hauser L."/>
            <person name="Kyrpides N."/>
            <person name="Ovchinnikiva G."/>
            <person name="Beliaev A."/>
        </authorList>
    </citation>
    <scope>NUCLEOTIDE SEQUENCE [LARGE SCALE GENOMIC DNA]</scope>
    <source>
        <strain>K</strain>
    </source>
</reference>
<gene>
    <name evidence="2" type="primary">ddl</name>
    <name type="ordered locus">AnaeK_3830</name>
</gene>
<organism>
    <name type="scientific">Anaeromyxobacter sp. (strain K)</name>
    <dbReference type="NCBI Taxonomy" id="447217"/>
    <lineage>
        <taxon>Bacteria</taxon>
        <taxon>Pseudomonadati</taxon>
        <taxon>Myxococcota</taxon>
        <taxon>Myxococcia</taxon>
        <taxon>Myxococcales</taxon>
        <taxon>Cystobacterineae</taxon>
        <taxon>Anaeromyxobacteraceae</taxon>
        <taxon>Anaeromyxobacter</taxon>
    </lineage>
</organism>
<proteinExistence type="inferred from homology"/>
<sequence length="308" mass="32023">MSTWTGKRVAVLYGGRSSEREVSLRTGAACADALRQKGHDVVLLDVDLEVAARLRAERVEVAFVALHGRFGEDGSIQGLLESMAIPYTGSGVLASAMGMDKTVSKAIFRSLGLAVADYRVFPRASAGSIGVGDLPFGLPCVVKPAGEGSSVGVHLVNEAAELGPACRDAASHAGDVIVERYVKGTEVDVAVLDGKALGAIEIVPANAFYDYAAKYTAGTTKYFYPARLPEAHVRAVMEAAEAAHRGIGCSGVTRVDFIVAGDGTPYILEVNTLPGMTATSLVPKIAAGLGLSFPDLCERILDGAALKA</sequence>
<protein>
    <recommendedName>
        <fullName evidence="2">D-alanine--D-alanine ligase</fullName>
        <ecNumber evidence="2">6.3.2.4</ecNumber>
    </recommendedName>
    <alternativeName>
        <fullName evidence="2">D-Ala-D-Ala ligase</fullName>
    </alternativeName>
    <alternativeName>
        <fullName evidence="2">D-alanylalanine synthetase</fullName>
    </alternativeName>
</protein>
<evidence type="ECO:0000250" key="1"/>
<evidence type="ECO:0000255" key="2">
    <source>
        <dbReference type="HAMAP-Rule" id="MF_00047"/>
    </source>
</evidence>
<dbReference type="EC" id="6.3.2.4" evidence="2"/>
<dbReference type="EMBL" id="CP001131">
    <property type="protein sequence ID" value="ACG75041.1"/>
    <property type="molecule type" value="Genomic_DNA"/>
</dbReference>
<dbReference type="RefSeq" id="WP_012527801.1">
    <property type="nucleotide sequence ID" value="NC_011145.1"/>
</dbReference>
<dbReference type="SMR" id="B4UES4"/>
<dbReference type="KEGG" id="ank:AnaeK_3830"/>
<dbReference type="HOGENOM" id="CLU_039268_1_1_7"/>
<dbReference type="OrthoDB" id="9813261at2"/>
<dbReference type="UniPathway" id="UPA00219"/>
<dbReference type="Proteomes" id="UP000001871">
    <property type="component" value="Chromosome"/>
</dbReference>
<dbReference type="GO" id="GO:0005737">
    <property type="term" value="C:cytoplasm"/>
    <property type="evidence" value="ECO:0007669"/>
    <property type="project" value="UniProtKB-SubCell"/>
</dbReference>
<dbReference type="GO" id="GO:0005524">
    <property type="term" value="F:ATP binding"/>
    <property type="evidence" value="ECO:0007669"/>
    <property type="project" value="UniProtKB-KW"/>
</dbReference>
<dbReference type="GO" id="GO:0008716">
    <property type="term" value="F:D-alanine-D-alanine ligase activity"/>
    <property type="evidence" value="ECO:0007669"/>
    <property type="project" value="UniProtKB-UniRule"/>
</dbReference>
<dbReference type="GO" id="GO:0046872">
    <property type="term" value="F:metal ion binding"/>
    <property type="evidence" value="ECO:0007669"/>
    <property type="project" value="UniProtKB-KW"/>
</dbReference>
<dbReference type="GO" id="GO:0071555">
    <property type="term" value="P:cell wall organization"/>
    <property type="evidence" value="ECO:0007669"/>
    <property type="project" value="UniProtKB-KW"/>
</dbReference>
<dbReference type="GO" id="GO:0009252">
    <property type="term" value="P:peptidoglycan biosynthetic process"/>
    <property type="evidence" value="ECO:0007669"/>
    <property type="project" value="UniProtKB-UniRule"/>
</dbReference>
<dbReference type="GO" id="GO:0008360">
    <property type="term" value="P:regulation of cell shape"/>
    <property type="evidence" value="ECO:0007669"/>
    <property type="project" value="UniProtKB-KW"/>
</dbReference>
<dbReference type="FunFam" id="3.30.470.20:FF:000008">
    <property type="entry name" value="D-alanine--D-alanine ligase"/>
    <property type="match status" value="1"/>
</dbReference>
<dbReference type="Gene3D" id="3.40.50.20">
    <property type="match status" value="1"/>
</dbReference>
<dbReference type="Gene3D" id="3.30.1490.20">
    <property type="entry name" value="ATP-grasp fold, A domain"/>
    <property type="match status" value="1"/>
</dbReference>
<dbReference type="Gene3D" id="3.30.470.20">
    <property type="entry name" value="ATP-grasp fold, B domain"/>
    <property type="match status" value="1"/>
</dbReference>
<dbReference type="HAMAP" id="MF_00047">
    <property type="entry name" value="Dala_Dala_lig"/>
    <property type="match status" value="1"/>
</dbReference>
<dbReference type="InterPro" id="IPR011761">
    <property type="entry name" value="ATP-grasp"/>
</dbReference>
<dbReference type="InterPro" id="IPR013815">
    <property type="entry name" value="ATP_grasp_subdomain_1"/>
</dbReference>
<dbReference type="InterPro" id="IPR000291">
    <property type="entry name" value="D-Ala_lig_Van_CS"/>
</dbReference>
<dbReference type="InterPro" id="IPR005905">
    <property type="entry name" value="D_ala_D_ala"/>
</dbReference>
<dbReference type="InterPro" id="IPR011095">
    <property type="entry name" value="Dala_Dala_lig_C"/>
</dbReference>
<dbReference type="InterPro" id="IPR011127">
    <property type="entry name" value="Dala_Dala_lig_N"/>
</dbReference>
<dbReference type="InterPro" id="IPR016185">
    <property type="entry name" value="PreATP-grasp_dom_sf"/>
</dbReference>
<dbReference type="NCBIfam" id="TIGR01205">
    <property type="entry name" value="D_ala_D_alaTIGR"/>
    <property type="match status" value="1"/>
</dbReference>
<dbReference type="NCBIfam" id="NF002378">
    <property type="entry name" value="PRK01372.1"/>
    <property type="match status" value="1"/>
</dbReference>
<dbReference type="PANTHER" id="PTHR23132">
    <property type="entry name" value="D-ALANINE--D-ALANINE LIGASE"/>
    <property type="match status" value="1"/>
</dbReference>
<dbReference type="PANTHER" id="PTHR23132:SF23">
    <property type="entry name" value="D-ALANINE--D-ALANINE LIGASE B"/>
    <property type="match status" value="1"/>
</dbReference>
<dbReference type="Pfam" id="PF07478">
    <property type="entry name" value="Dala_Dala_lig_C"/>
    <property type="match status" value="1"/>
</dbReference>
<dbReference type="Pfam" id="PF01820">
    <property type="entry name" value="Dala_Dala_lig_N"/>
    <property type="match status" value="2"/>
</dbReference>
<dbReference type="PIRSF" id="PIRSF039102">
    <property type="entry name" value="Ddl/VanB"/>
    <property type="match status" value="1"/>
</dbReference>
<dbReference type="SUPFAM" id="SSF56059">
    <property type="entry name" value="Glutathione synthetase ATP-binding domain-like"/>
    <property type="match status" value="1"/>
</dbReference>
<dbReference type="SUPFAM" id="SSF52440">
    <property type="entry name" value="PreATP-grasp domain"/>
    <property type="match status" value="1"/>
</dbReference>
<dbReference type="PROSITE" id="PS50975">
    <property type="entry name" value="ATP_GRASP"/>
    <property type="match status" value="1"/>
</dbReference>
<dbReference type="PROSITE" id="PS00843">
    <property type="entry name" value="DALA_DALA_LIGASE_1"/>
    <property type="match status" value="1"/>
</dbReference>
<dbReference type="PROSITE" id="PS00844">
    <property type="entry name" value="DALA_DALA_LIGASE_2"/>
    <property type="match status" value="1"/>
</dbReference>
<feature type="chain" id="PRO_1000091159" description="D-alanine--D-alanine ligase">
    <location>
        <begin position="1"/>
        <end position="308"/>
    </location>
</feature>
<feature type="domain" description="ATP-grasp" evidence="2">
    <location>
        <begin position="105"/>
        <end position="302"/>
    </location>
</feature>
<feature type="binding site" evidence="2">
    <location>
        <begin position="133"/>
        <end position="188"/>
    </location>
    <ligand>
        <name>ATP</name>
        <dbReference type="ChEBI" id="CHEBI:30616"/>
    </ligand>
</feature>
<feature type="binding site" evidence="2">
    <location>
        <position position="256"/>
    </location>
    <ligand>
        <name>Mg(2+)</name>
        <dbReference type="ChEBI" id="CHEBI:18420"/>
        <label>1</label>
    </ligand>
</feature>
<feature type="binding site" evidence="2">
    <location>
        <position position="269"/>
    </location>
    <ligand>
        <name>Mg(2+)</name>
        <dbReference type="ChEBI" id="CHEBI:18420"/>
        <label>1</label>
    </ligand>
</feature>
<feature type="binding site" evidence="2">
    <location>
        <position position="269"/>
    </location>
    <ligand>
        <name>Mg(2+)</name>
        <dbReference type="ChEBI" id="CHEBI:18420"/>
        <label>2</label>
    </ligand>
</feature>
<feature type="binding site" evidence="2">
    <location>
        <position position="271"/>
    </location>
    <ligand>
        <name>Mg(2+)</name>
        <dbReference type="ChEBI" id="CHEBI:18420"/>
        <label>2</label>
    </ligand>
</feature>
<accession>B4UES4</accession>
<keyword id="KW-0067">ATP-binding</keyword>
<keyword id="KW-0133">Cell shape</keyword>
<keyword id="KW-0961">Cell wall biogenesis/degradation</keyword>
<keyword id="KW-0963">Cytoplasm</keyword>
<keyword id="KW-0436">Ligase</keyword>
<keyword id="KW-0460">Magnesium</keyword>
<keyword id="KW-0464">Manganese</keyword>
<keyword id="KW-0479">Metal-binding</keyword>
<keyword id="KW-0547">Nucleotide-binding</keyword>
<keyword id="KW-0573">Peptidoglycan synthesis</keyword>
<name>DDL_ANASK</name>